<feature type="chain" id="PRO_0000426070" description="Beta-mannosyltransferase 2">
    <location>
        <begin position="1"/>
        <end position="654"/>
    </location>
</feature>
<feature type="topological domain" description="Cytoplasmic" evidence="1">
    <location>
        <begin position="1"/>
        <end position="37"/>
    </location>
</feature>
<feature type="transmembrane region" description="Helical" evidence="1">
    <location>
        <begin position="38"/>
        <end position="58"/>
    </location>
</feature>
<feature type="topological domain" description="Extracellular" evidence="1">
    <location>
        <begin position="59"/>
        <end position="654"/>
    </location>
</feature>
<accession>Q59MA6</accession>
<accession>A0A1D8PDF6</accession>
<comment type="function">
    <text evidence="4">Beta-mannosyltransferase involved in cell wall biosynthesis. Required for the addition of beta-mannose to the acid-labile fraction of cell wall phosphopeptidomannan.</text>
</comment>
<comment type="subcellular location">
    <subcellularLocation>
        <location evidence="6">Membrane</location>
        <topology evidence="6">Single-pass type II membrane protein</topology>
    </subcellularLocation>
</comment>
<comment type="induction">
    <text evidence="2 3 5">Regulated on yeast-hypha and white-opaque switches, and repressed in biofilm.</text>
</comment>
<comment type="disruption phenotype">
    <text evidence="4">Impairs the elongation of beta-mannose chains on the acid-labile fraction of cell wall phosphopeptidomannan.</text>
</comment>
<comment type="similarity">
    <text evidence="6">Belongs to the BMT family.</text>
</comment>
<dbReference type="EC" id="2.4.1.-"/>
<dbReference type="EMBL" id="CP017623">
    <property type="protein sequence ID" value="AOW26172.1"/>
    <property type="molecule type" value="Genomic_DNA"/>
</dbReference>
<dbReference type="RefSeq" id="XP_710865.2">
    <property type="nucleotide sequence ID" value="XM_705773.2"/>
</dbReference>
<dbReference type="SMR" id="Q59MA6"/>
<dbReference type="STRING" id="237561.Q59MA6"/>
<dbReference type="CAZy" id="GT91">
    <property type="family name" value="Glycosyltransferase Family 91"/>
</dbReference>
<dbReference type="EnsemblFungi" id="C1_05000W_A-T">
    <property type="protein sequence ID" value="C1_05000W_A-T-p1"/>
    <property type="gene ID" value="C1_05000W_A"/>
</dbReference>
<dbReference type="GeneID" id="3647531"/>
<dbReference type="KEGG" id="cal:CAALFM_C105000WA"/>
<dbReference type="CGD" id="CAL0000199919">
    <property type="gene designation" value="RHD1"/>
</dbReference>
<dbReference type="VEuPathDB" id="FungiDB:C1_05000W_A"/>
<dbReference type="eggNOG" id="ENOG502QTZG">
    <property type="taxonomic scope" value="Eukaryota"/>
</dbReference>
<dbReference type="HOGENOM" id="CLU_013841_1_1_1"/>
<dbReference type="InParanoid" id="Q59MA6"/>
<dbReference type="OrthoDB" id="3631276at2759"/>
<dbReference type="PRO" id="PR:Q59MA6"/>
<dbReference type="Proteomes" id="UP000000559">
    <property type="component" value="Chromosome 1"/>
</dbReference>
<dbReference type="GO" id="GO:0016020">
    <property type="term" value="C:membrane"/>
    <property type="evidence" value="ECO:0007669"/>
    <property type="project" value="UniProtKB-SubCell"/>
</dbReference>
<dbReference type="GO" id="GO:0000030">
    <property type="term" value="F:mannosyltransferase activity"/>
    <property type="evidence" value="ECO:0007669"/>
    <property type="project" value="InterPro"/>
</dbReference>
<dbReference type="GO" id="GO:0070135">
    <property type="term" value="P:beta-1,2-oligomannoside metabolic process"/>
    <property type="evidence" value="ECO:0000315"/>
    <property type="project" value="CGD"/>
</dbReference>
<dbReference type="GO" id="GO:0071555">
    <property type="term" value="P:cell wall organization"/>
    <property type="evidence" value="ECO:0007669"/>
    <property type="project" value="UniProtKB-KW"/>
</dbReference>
<dbReference type="GO" id="GO:0006688">
    <property type="term" value="P:glycosphingolipid biosynthetic process"/>
    <property type="evidence" value="ECO:0000316"/>
    <property type="project" value="CGD"/>
</dbReference>
<dbReference type="InterPro" id="IPR021988">
    <property type="entry name" value="BMT1"/>
</dbReference>
<dbReference type="Pfam" id="PF12141">
    <property type="entry name" value="BMT"/>
    <property type="match status" value="1"/>
</dbReference>
<organism>
    <name type="scientific">Candida albicans (strain SC5314 / ATCC MYA-2876)</name>
    <name type="common">Yeast</name>
    <dbReference type="NCBI Taxonomy" id="237561"/>
    <lineage>
        <taxon>Eukaryota</taxon>
        <taxon>Fungi</taxon>
        <taxon>Dikarya</taxon>
        <taxon>Ascomycota</taxon>
        <taxon>Saccharomycotina</taxon>
        <taxon>Pichiomycetes</taxon>
        <taxon>Debaryomycetaceae</taxon>
        <taxon>Candida/Lodderomyces clade</taxon>
        <taxon>Candida</taxon>
    </lineage>
</organism>
<keyword id="KW-0961">Cell wall biogenesis/degradation</keyword>
<keyword id="KW-0328">Glycosyltransferase</keyword>
<keyword id="KW-0472">Membrane</keyword>
<keyword id="KW-1185">Reference proteome</keyword>
<keyword id="KW-0735">Signal-anchor</keyword>
<keyword id="KW-0808">Transferase</keyword>
<keyword id="KW-0812">Transmembrane</keyword>
<keyword id="KW-1133">Transmembrane helix</keyword>
<sequence length="654" mass="75813">MLAWLRHRIRSYNTSTYSSILPSASFGKVYKIGTKLNFTLLALCLLLACSVFFNYFYLADNNGLDIDTKGEEEENVFKDRKMVIFPNNFEITDKNLLEYYLKTLEEPLHPQDTIYRNRFIYKVPDVSYTSQTINLFSGLSQNSQSSKCEDLSSSYSFDVSGPQNKNCDLYKVLGKFLNDDSEYFQEISPLFPKLKEMLVKKEIEKHWFQLIGSSVWLEQYGVHLMTSRIFYSSTGDKVKPVVSLTYVQVFDHEWREIENVELIVPDGEGKYKPMTYPTFLPMSVYHNEKQQQGRFYGVEDPRITLVRNKLGYDEPIIVYNSHHRKITDAKSDNDGESNIHFKAYRSIFMAWLWQNQKGKNNVEEIETGKMKNRVYVKSKELIKPNNKREDKEKNWAPFINYQQRLQQGFDSHVYFMYQFQDLKILKCSLLDEEDCVWEYQFNDKNGAGRLRGGTELVNINQLLTTFDHPEIKRVKDLMPQNREIWIGVARAALEKCGCGDKMYRPNIVILIKDGDDQYRLSHVSPFVGLGIPILPWWPDKGLCDGKNLIIPNGISSWHLNKDEDNSVQDYLTLSISRADSTVDLLHIKGLLKSILFDDPNSKLLELNDYGFNNKNIECAVKSSDAFCKKYGSEYKLNNNKEEDKANGNGKGSSS</sequence>
<gene>
    <name type="primary">RHD1</name>
    <name type="synonym">BMT2</name>
    <name type="synonym">IFQ3</name>
    <name type="synonym">WRY7</name>
    <name type="ordered locus">CAALFM_C105000WA</name>
    <name type="ORF">CaO19.54</name>
    <name type="ORF">CaO19.7715</name>
</gene>
<evidence type="ECO:0000255" key="1"/>
<evidence type="ECO:0000269" key="2">
    <source>
    </source>
</evidence>
<evidence type="ECO:0000269" key="3">
    <source>
    </source>
</evidence>
<evidence type="ECO:0000269" key="4">
    <source>
    </source>
</evidence>
<evidence type="ECO:0000269" key="5">
    <source>
    </source>
</evidence>
<evidence type="ECO:0000305" key="6"/>
<proteinExistence type="evidence at transcript level"/>
<reference key="1">
    <citation type="journal article" date="2004" name="Proc. Natl. Acad. Sci. U.S.A.">
        <title>The diploid genome sequence of Candida albicans.</title>
        <authorList>
            <person name="Jones T."/>
            <person name="Federspiel N.A."/>
            <person name="Chibana H."/>
            <person name="Dungan J."/>
            <person name="Kalman S."/>
            <person name="Magee B.B."/>
            <person name="Newport G."/>
            <person name="Thorstenson Y.R."/>
            <person name="Agabian N."/>
            <person name="Magee P.T."/>
            <person name="Davis R.W."/>
            <person name="Scherer S."/>
        </authorList>
    </citation>
    <scope>NUCLEOTIDE SEQUENCE [LARGE SCALE GENOMIC DNA]</scope>
    <source>
        <strain>SC5314 / ATCC MYA-2876</strain>
    </source>
</reference>
<reference key="2">
    <citation type="journal article" date="2007" name="Genome Biol.">
        <title>Assembly of the Candida albicans genome into sixteen supercontigs aligned on the eight chromosomes.</title>
        <authorList>
            <person name="van het Hoog M."/>
            <person name="Rast T.J."/>
            <person name="Martchenko M."/>
            <person name="Grindle S."/>
            <person name="Dignard D."/>
            <person name="Hogues H."/>
            <person name="Cuomo C."/>
            <person name="Berriman M."/>
            <person name="Scherer S."/>
            <person name="Magee B.B."/>
            <person name="Whiteway M."/>
            <person name="Chibana H."/>
            <person name="Nantel A."/>
            <person name="Magee P.T."/>
        </authorList>
    </citation>
    <scope>GENOME REANNOTATION</scope>
    <source>
        <strain>SC5314 / ATCC MYA-2876</strain>
    </source>
</reference>
<reference key="3">
    <citation type="journal article" date="2013" name="Genome Biol.">
        <title>Assembly of a phased diploid Candida albicans genome facilitates allele-specific measurements and provides a simple model for repeat and indel structure.</title>
        <authorList>
            <person name="Muzzey D."/>
            <person name="Schwartz K."/>
            <person name="Weissman J.S."/>
            <person name="Sherlock G."/>
        </authorList>
    </citation>
    <scope>NUCLEOTIDE SEQUENCE [LARGE SCALE GENOMIC DNA]</scope>
    <scope>GENOME REANNOTATION</scope>
    <source>
        <strain>SC5314 / ATCC MYA-2876</strain>
    </source>
</reference>
<reference key="4">
    <citation type="journal article" date="2002" name="Mol. Biol. Cell">
        <title>Transcription profiling of Candida albicans cells undergoing the yeast-to-hyphal transition.</title>
        <authorList>
            <person name="Nantel A."/>
            <person name="Dignard D."/>
            <person name="Bachewich C."/>
            <person name="Harcus D."/>
            <person name="Marcil A."/>
            <person name="Bouin A.P."/>
            <person name="Sensen C.W."/>
            <person name="Hogues H."/>
            <person name="van het Hoog M."/>
            <person name="Gordon P."/>
            <person name="Rigby T."/>
            <person name="Benoit F."/>
            <person name="Tessier D.C."/>
            <person name="Thomas D.Y."/>
            <person name="Whiteway M."/>
        </authorList>
    </citation>
    <scope>INDUCTION</scope>
</reference>
<reference key="5">
    <citation type="journal article" date="2002" name="Proc. Natl. Acad. Sci. U.S.A.">
        <title>Metabolic specialization associated with phenotypic switching in Candidaalbicans.</title>
        <authorList>
            <person name="Lan C.Y."/>
            <person name="Newport G."/>
            <person name="Murillo L.A."/>
            <person name="Jones T."/>
            <person name="Scherer S."/>
            <person name="Davis R.W."/>
            <person name="Agabian N."/>
        </authorList>
    </citation>
    <scope>INDUCTION</scope>
</reference>
<reference key="6">
    <citation type="journal article" date="2008" name="J. Biol. Chem.">
        <title>Identification of a new family of genes involved in beta-1,2-mannosylation of glycans in Pichia pastoris and Candida albicans.</title>
        <authorList>
            <person name="Mille C."/>
            <person name="Bobrowicz P."/>
            <person name="Trinel P.A."/>
            <person name="Li H."/>
            <person name="Maes E."/>
            <person name="Guerardel Y."/>
            <person name="Fradin C."/>
            <person name="Martinez-Esparza M."/>
            <person name="Davidson R.C."/>
            <person name="Janbon G."/>
            <person name="Poulain D."/>
            <person name="Wildt S."/>
        </authorList>
    </citation>
    <scope>IDENTIFICATION</scope>
    <scope>DISRUPTION PHENOTYPE</scope>
    <scope>FUNCTION</scope>
</reference>
<reference key="7">
    <citation type="journal article" date="2012" name="Cell">
        <title>A recently evolved transcriptional network controls biofilm development in Candida albicans.</title>
        <authorList>
            <person name="Nobile C.J."/>
            <person name="Fox E.P."/>
            <person name="Nett J.E."/>
            <person name="Sorrells T.R."/>
            <person name="Mitrovich Q.M."/>
            <person name="Hernday A.D."/>
            <person name="Tuch B.B."/>
            <person name="Andes D.R."/>
            <person name="Johnson A.D."/>
        </authorList>
    </citation>
    <scope>INDUCTION</scope>
</reference>
<protein>
    <recommendedName>
        <fullName>Beta-mannosyltransferase 2</fullName>
        <ecNumber>2.4.1.-</ecNumber>
    </recommendedName>
    <alternativeName>
        <fullName>Repressed during hyphae development protein 1</fullName>
    </alternativeName>
    <alternativeName>
        <fullName>WRY family protein 7</fullName>
    </alternativeName>
</protein>
<name>BMT2_CANAL</name>